<feature type="peptide" id="PRO_0000414976" description="Conotoxin Cal6.43b" evidence="2">
    <location>
        <begin position="1"/>
        <end position="28"/>
    </location>
</feature>
<feature type="disulfide bond" evidence="1">
    <location>
        <begin position="3"/>
        <end position="13"/>
    </location>
</feature>
<feature type="disulfide bond" evidence="1">
    <location>
        <begin position="7"/>
        <end position="19"/>
    </location>
</feature>
<feature type="disulfide bond" evidence="1">
    <location>
        <begin position="12"/>
        <end position="25"/>
    </location>
</feature>
<organism>
    <name type="scientific">Californiconus californicus</name>
    <name type="common">California cone</name>
    <name type="synonym">Conus californicus</name>
    <dbReference type="NCBI Taxonomy" id="1736779"/>
    <lineage>
        <taxon>Eukaryota</taxon>
        <taxon>Metazoa</taxon>
        <taxon>Spiralia</taxon>
        <taxon>Lophotrochozoa</taxon>
        <taxon>Mollusca</taxon>
        <taxon>Gastropoda</taxon>
        <taxon>Caenogastropoda</taxon>
        <taxon>Neogastropoda</taxon>
        <taxon>Conoidea</taxon>
        <taxon>Conidae</taxon>
        <taxon>Californiconus</taxon>
    </lineage>
</organism>
<keyword id="KW-0903">Direct protein sequencing</keyword>
<keyword id="KW-1015">Disulfide bond</keyword>
<keyword id="KW-0872">Ion channel impairing toxin</keyword>
<keyword id="KW-0960">Knottin</keyword>
<keyword id="KW-0528">Neurotoxin</keyword>
<keyword id="KW-0964">Secreted</keyword>
<keyword id="KW-0800">Toxin</keyword>
<name>O163B_CONCL</name>
<evidence type="ECO:0000250" key="1"/>
<evidence type="ECO:0000269" key="2">
    <source>
    </source>
</evidence>
<evidence type="ECO:0000303" key="3">
    <source>
    </source>
</evidence>
<evidence type="ECO:0000305" key="4"/>
<evidence type="ECO:0000305" key="5">
    <source>
    </source>
</evidence>
<reference key="1">
    <citation type="journal article" date="2011" name="Toxicon">
        <title>Diversity of conotoxin types from Conus californicus reflects a diversity of prey types and a novel evolutionary history.</title>
        <authorList>
            <person name="Elliger C.A."/>
            <person name="Richmond T.A."/>
            <person name="Lebaric Z.N."/>
            <person name="Pierce N.T."/>
            <person name="Sweedler J.V."/>
            <person name="Gilly W.F."/>
        </authorList>
    </citation>
    <scope>PROTEIN SEQUENCE</scope>
    <scope>SUBCELLULAR LOCATION</scope>
    <scope>IDENTIFICATION BY MASS SPECTROMETRY</scope>
    <source>
        <tissue>Venom</tissue>
    </source>
</reference>
<comment type="function">
    <text evidence="4">Probable neurotoxin with unknown target. Possibly targets ion channels.</text>
</comment>
<comment type="subcellular location">
    <subcellularLocation>
        <location evidence="2">Secreted</location>
    </subcellularLocation>
</comment>
<comment type="tissue specificity">
    <text evidence="5">Expressed by the venom duct.</text>
</comment>
<comment type="domain">
    <text evidence="1">The presence of a 'disulfide through disulfide knot' structurally defines this protein as a knottin.</text>
</comment>
<comment type="domain">
    <text>The cysteine framework is VI/VII (C-C-CC-C-C).</text>
</comment>
<comment type="caution">
    <text evidence="4">This peptide does not correspond to any sequence of the cDNA library.</text>
</comment>
<proteinExistence type="evidence at protein level"/>
<dbReference type="GO" id="GO:0005576">
    <property type="term" value="C:extracellular region"/>
    <property type="evidence" value="ECO:0007669"/>
    <property type="project" value="UniProtKB-SubCell"/>
</dbReference>
<dbReference type="GO" id="GO:0099106">
    <property type="term" value="F:ion channel regulator activity"/>
    <property type="evidence" value="ECO:0007669"/>
    <property type="project" value="UniProtKB-KW"/>
</dbReference>
<dbReference type="GO" id="GO:0090729">
    <property type="term" value="F:toxin activity"/>
    <property type="evidence" value="ECO:0007669"/>
    <property type="project" value="UniProtKB-KW"/>
</dbReference>
<accession>P0DJB2</accession>
<protein>
    <recommendedName>
        <fullName evidence="4">Conotoxin Cal6.43b</fullName>
    </recommendedName>
    <alternativeName>
        <fullName evidence="3">Conotoxin Cal6.5a</fullName>
    </alternativeName>
</protein>
<sequence length="28" mass="3000">DDCTTYCYGVHCCPPAFKCAASPSCKQT</sequence>